<gene>
    <name evidence="1" type="primary">rlmD</name>
    <name type="synonym">rumA</name>
    <name type="ordered locus">HCH_01806</name>
</gene>
<comment type="function">
    <text evidence="1">Catalyzes the formation of 5-methyl-uridine at position 1939 (m5U1939) in 23S rRNA.</text>
</comment>
<comment type="catalytic activity">
    <reaction evidence="1">
        <text>uridine(1939) in 23S rRNA + S-adenosyl-L-methionine = 5-methyluridine(1939) in 23S rRNA + S-adenosyl-L-homocysteine + H(+)</text>
        <dbReference type="Rhea" id="RHEA:42908"/>
        <dbReference type="Rhea" id="RHEA-COMP:10278"/>
        <dbReference type="Rhea" id="RHEA-COMP:10279"/>
        <dbReference type="ChEBI" id="CHEBI:15378"/>
        <dbReference type="ChEBI" id="CHEBI:57856"/>
        <dbReference type="ChEBI" id="CHEBI:59789"/>
        <dbReference type="ChEBI" id="CHEBI:65315"/>
        <dbReference type="ChEBI" id="CHEBI:74447"/>
        <dbReference type="EC" id="2.1.1.190"/>
    </reaction>
</comment>
<comment type="similarity">
    <text evidence="1">Belongs to the class I-like SAM-binding methyltransferase superfamily. RNA M5U methyltransferase family. RlmD subfamily.</text>
</comment>
<accession>Q2SL27</accession>
<proteinExistence type="inferred from homology"/>
<organism>
    <name type="scientific">Hahella chejuensis (strain KCTC 2396)</name>
    <dbReference type="NCBI Taxonomy" id="349521"/>
    <lineage>
        <taxon>Bacteria</taxon>
        <taxon>Pseudomonadati</taxon>
        <taxon>Pseudomonadota</taxon>
        <taxon>Gammaproteobacteria</taxon>
        <taxon>Oceanospirillales</taxon>
        <taxon>Hahellaceae</taxon>
        <taxon>Hahella</taxon>
    </lineage>
</organism>
<reference key="1">
    <citation type="journal article" date="2005" name="Nucleic Acids Res.">
        <title>Genomic blueprint of Hahella chejuensis, a marine microbe producing an algicidal agent.</title>
        <authorList>
            <person name="Jeong H."/>
            <person name="Yim J.H."/>
            <person name="Lee C."/>
            <person name="Choi S.-H."/>
            <person name="Park Y.K."/>
            <person name="Yoon S.H."/>
            <person name="Hur C.-G."/>
            <person name="Kang H.-Y."/>
            <person name="Kim D."/>
            <person name="Lee H.H."/>
            <person name="Park K.H."/>
            <person name="Park S.-H."/>
            <person name="Park H.-S."/>
            <person name="Lee H.K."/>
            <person name="Oh T.K."/>
            <person name="Kim J.F."/>
        </authorList>
    </citation>
    <scope>NUCLEOTIDE SEQUENCE [LARGE SCALE GENOMIC DNA]</scope>
    <source>
        <strain>KCTC 2396</strain>
    </source>
</reference>
<sequence>MSRRRKKLPQESITCEIESLSHEGRGVSHKDGKTLFVEGALPGETVTARYVNSRRSYDELAVEEVLTQHPQRIEPDCQFSKLCGGCSMQHVDLGFQINHKESVLLDHLRHFGDLKPEQVVPPLVGAGRGYRTKARLGVRYVAKRDEVLVGFRERYSNFLTAIDECPILIESVGGRIPELKALVRSLSGYQRIPQIEVAAGDDMCALVIRHMDPLTEEDLQKLIAFSEQTGLAIYLQPKGPDTVAKLWPKDGQELLSYQLRDYGLTMQFHPMDFTQVNRDINRRMLAQALEWLQPQAGETILDLFCGLGNFTLPIARSAAHVVGVEGSEDMVRRGYANAELNGISNVEFHAADLHLPLAPAKEAKHAWLRTYDKVLLDPPRSGAEELAKQMTRFGAKRIVYVSCNPATLARDAGILATQGYKLIKAGVMDMFPHTAHVESMALFEKA</sequence>
<evidence type="ECO:0000255" key="1">
    <source>
        <dbReference type="HAMAP-Rule" id="MF_01010"/>
    </source>
</evidence>
<name>RLMD_HAHCH</name>
<feature type="chain" id="PRO_0000282047" description="23S rRNA (uracil(1939)-C(5))-methyltransferase RlmD">
    <location>
        <begin position="1"/>
        <end position="446"/>
    </location>
</feature>
<feature type="domain" description="TRAM" evidence="1">
    <location>
        <begin position="6"/>
        <end position="64"/>
    </location>
</feature>
<feature type="active site" description="Nucleophile" evidence="1">
    <location>
        <position position="403"/>
    </location>
</feature>
<feature type="binding site" evidence="1">
    <location>
        <position position="77"/>
    </location>
    <ligand>
        <name>[4Fe-4S] cluster</name>
        <dbReference type="ChEBI" id="CHEBI:49883"/>
    </ligand>
</feature>
<feature type="binding site" evidence="1">
    <location>
        <position position="83"/>
    </location>
    <ligand>
        <name>[4Fe-4S] cluster</name>
        <dbReference type="ChEBI" id="CHEBI:49883"/>
    </ligand>
</feature>
<feature type="binding site" evidence="1">
    <location>
        <position position="86"/>
    </location>
    <ligand>
        <name>[4Fe-4S] cluster</name>
        <dbReference type="ChEBI" id="CHEBI:49883"/>
    </ligand>
</feature>
<feature type="binding site" evidence="1">
    <location>
        <position position="165"/>
    </location>
    <ligand>
        <name>[4Fe-4S] cluster</name>
        <dbReference type="ChEBI" id="CHEBI:49883"/>
    </ligand>
</feature>
<feature type="binding site" evidence="1">
    <location>
        <position position="275"/>
    </location>
    <ligand>
        <name>S-adenosyl-L-methionine</name>
        <dbReference type="ChEBI" id="CHEBI:59789"/>
    </ligand>
</feature>
<feature type="binding site" evidence="1">
    <location>
        <position position="304"/>
    </location>
    <ligand>
        <name>S-adenosyl-L-methionine</name>
        <dbReference type="ChEBI" id="CHEBI:59789"/>
    </ligand>
</feature>
<feature type="binding site" evidence="1">
    <location>
        <position position="309"/>
    </location>
    <ligand>
        <name>S-adenosyl-L-methionine</name>
        <dbReference type="ChEBI" id="CHEBI:59789"/>
    </ligand>
</feature>
<feature type="binding site" evidence="1">
    <location>
        <position position="325"/>
    </location>
    <ligand>
        <name>S-adenosyl-L-methionine</name>
        <dbReference type="ChEBI" id="CHEBI:59789"/>
    </ligand>
</feature>
<feature type="binding site" evidence="1">
    <location>
        <position position="352"/>
    </location>
    <ligand>
        <name>S-adenosyl-L-methionine</name>
        <dbReference type="ChEBI" id="CHEBI:59789"/>
    </ligand>
</feature>
<feature type="binding site" evidence="1">
    <location>
        <position position="377"/>
    </location>
    <ligand>
        <name>S-adenosyl-L-methionine</name>
        <dbReference type="ChEBI" id="CHEBI:59789"/>
    </ligand>
</feature>
<dbReference type="EC" id="2.1.1.190" evidence="1"/>
<dbReference type="EMBL" id="CP000155">
    <property type="protein sequence ID" value="ABC28647.1"/>
    <property type="molecule type" value="Genomic_DNA"/>
</dbReference>
<dbReference type="RefSeq" id="WP_011395719.1">
    <property type="nucleotide sequence ID" value="NC_007645.1"/>
</dbReference>
<dbReference type="SMR" id="Q2SL27"/>
<dbReference type="STRING" id="349521.HCH_01806"/>
<dbReference type="KEGG" id="hch:HCH_01806"/>
<dbReference type="eggNOG" id="COG2265">
    <property type="taxonomic scope" value="Bacteria"/>
</dbReference>
<dbReference type="HOGENOM" id="CLU_014689_8_2_6"/>
<dbReference type="OrthoDB" id="9804590at2"/>
<dbReference type="Proteomes" id="UP000000238">
    <property type="component" value="Chromosome"/>
</dbReference>
<dbReference type="GO" id="GO:0051539">
    <property type="term" value="F:4 iron, 4 sulfur cluster binding"/>
    <property type="evidence" value="ECO:0007669"/>
    <property type="project" value="UniProtKB-KW"/>
</dbReference>
<dbReference type="GO" id="GO:0005506">
    <property type="term" value="F:iron ion binding"/>
    <property type="evidence" value="ECO:0007669"/>
    <property type="project" value="UniProtKB-UniRule"/>
</dbReference>
<dbReference type="GO" id="GO:0003723">
    <property type="term" value="F:RNA binding"/>
    <property type="evidence" value="ECO:0007669"/>
    <property type="project" value="InterPro"/>
</dbReference>
<dbReference type="GO" id="GO:0070041">
    <property type="term" value="F:rRNA (uridine-C5-)-methyltransferase activity"/>
    <property type="evidence" value="ECO:0007669"/>
    <property type="project" value="UniProtKB-UniRule"/>
</dbReference>
<dbReference type="GO" id="GO:0070475">
    <property type="term" value="P:rRNA base methylation"/>
    <property type="evidence" value="ECO:0007669"/>
    <property type="project" value="TreeGrafter"/>
</dbReference>
<dbReference type="CDD" id="cd02440">
    <property type="entry name" value="AdoMet_MTases"/>
    <property type="match status" value="1"/>
</dbReference>
<dbReference type="FunFam" id="3.40.50.150:FF:000009">
    <property type="entry name" value="23S rRNA (Uracil(1939)-C(5))-methyltransferase RlmD"/>
    <property type="match status" value="1"/>
</dbReference>
<dbReference type="Gene3D" id="2.40.50.1070">
    <property type="match status" value="1"/>
</dbReference>
<dbReference type="Gene3D" id="2.40.50.140">
    <property type="entry name" value="Nucleic acid-binding proteins"/>
    <property type="match status" value="1"/>
</dbReference>
<dbReference type="Gene3D" id="3.40.50.150">
    <property type="entry name" value="Vaccinia Virus protein VP39"/>
    <property type="match status" value="1"/>
</dbReference>
<dbReference type="HAMAP" id="MF_01010">
    <property type="entry name" value="23SrRNA_methyltr_RlmD"/>
    <property type="match status" value="1"/>
</dbReference>
<dbReference type="InterPro" id="IPR001566">
    <property type="entry name" value="23S_rRNA_MeTrfase_RlmD"/>
</dbReference>
<dbReference type="InterPro" id="IPR030390">
    <property type="entry name" value="MeTrfase_TrmA_AS"/>
</dbReference>
<dbReference type="InterPro" id="IPR030391">
    <property type="entry name" value="MeTrfase_TrmA_CS"/>
</dbReference>
<dbReference type="InterPro" id="IPR012340">
    <property type="entry name" value="NA-bd_OB-fold"/>
</dbReference>
<dbReference type="InterPro" id="IPR029063">
    <property type="entry name" value="SAM-dependent_MTases_sf"/>
</dbReference>
<dbReference type="InterPro" id="IPR002792">
    <property type="entry name" value="TRAM_dom"/>
</dbReference>
<dbReference type="InterPro" id="IPR010280">
    <property type="entry name" value="U5_MeTrfase_fam"/>
</dbReference>
<dbReference type="NCBIfam" id="NF009639">
    <property type="entry name" value="PRK13168.1"/>
    <property type="match status" value="1"/>
</dbReference>
<dbReference type="NCBIfam" id="TIGR00479">
    <property type="entry name" value="rumA"/>
    <property type="match status" value="1"/>
</dbReference>
<dbReference type="PANTHER" id="PTHR11061:SF49">
    <property type="entry name" value="23S RRNA (URACIL(1939)-C(5))-METHYLTRANSFERASE RLMD"/>
    <property type="match status" value="1"/>
</dbReference>
<dbReference type="PANTHER" id="PTHR11061">
    <property type="entry name" value="RNA M5U METHYLTRANSFERASE"/>
    <property type="match status" value="1"/>
</dbReference>
<dbReference type="Pfam" id="PF01938">
    <property type="entry name" value="TRAM"/>
    <property type="match status" value="1"/>
</dbReference>
<dbReference type="Pfam" id="PF05958">
    <property type="entry name" value="tRNA_U5-meth_tr"/>
    <property type="match status" value="1"/>
</dbReference>
<dbReference type="SUPFAM" id="SSF50249">
    <property type="entry name" value="Nucleic acid-binding proteins"/>
    <property type="match status" value="1"/>
</dbReference>
<dbReference type="SUPFAM" id="SSF53335">
    <property type="entry name" value="S-adenosyl-L-methionine-dependent methyltransferases"/>
    <property type="match status" value="1"/>
</dbReference>
<dbReference type="PROSITE" id="PS51687">
    <property type="entry name" value="SAM_MT_RNA_M5U"/>
    <property type="match status" value="1"/>
</dbReference>
<dbReference type="PROSITE" id="PS50926">
    <property type="entry name" value="TRAM"/>
    <property type="match status" value="1"/>
</dbReference>
<dbReference type="PROSITE" id="PS01230">
    <property type="entry name" value="TRMA_1"/>
    <property type="match status" value="1"/>
</dbReference>
<dbReference type="PROSITE" id="PS01231">
    <property type="entry name" value="TRMA_2"/>
    <property type="match status" value="1"/>
</dbReference>
<keyword id="KW-0004">4Fe-4S</keyword>
<keyword id="KW-0408">Iron</keyword>
<keyword id="KW-0411">Iron-sulfur</keyword>
<keyword id="KW-0479">Metal-binding</keyword>
<keyword id="KW-0489">Methyltransferase</keyword>
<keyword id="KW-1185">Reference proteome</keyword>
<keyword id="KW-0698">rRNA processing</keyword>
<keyword id="KW-0949">S-adenosyl-L-methionine</keyword>
<keyword id="KW-0808">Transferase</keyword>
<protein>
    <recommendedName>
        <fullName evidence="1">23S rRNA (uracil(1939)-C(5))-methyltransferase RlmD</fullName>
        <ecNumber evidence="1">2.1.1.190</ecNumber>
    </recommendedName>
    <alternativeName>
        <fullName evidence="1">23S rRNA(m5U1939)-methyltransferase</fullName>
    </alternativeName>
</protein>